<organism>
    <name type="scientific">Fagopyrum esculentum</name>
    <name type="common">Common buckwheat</name>
    <name type="synonym">Polygonum fagopyrum</name>
    <dbReference type="NCBI Taxonomy" id="3617"/>
    <lineage>
        <taxon>Eukaryota</taxon>
        <taxon>Viridiplantae</taxon>
        <taxon>Streptophyta</taxon>
        <taxon>Embryophyta</taxon>
        <taxon>Tracheophyta</taxon>
        <taxon>Spermatophyta</taxon>
        <taxon>Magnoliopsida</taxon>
        <taxon>eudicotyledons</taxon>
        <taxon>Gunneridae</taxon>
        <taxon>Pentapetalae</taxon>
        <taxon>Caryophyllales</taxon>
        <taxon>Polygonaceae</taxon>
        <taxon>Polygonoideae</taxon>
        <taxon>Fagopyreae</taxon>
        <taxon>Fagopyrum</taxon>
    </lineage>
</organism>
<comment type="function">
    <text evidence="2">Antimicrobial peptide active against plant pathogenic fungi and Gram-negative and -positive bacteria.</text>
</comment>
<comment type="PTM">
    <text evidence="2">Not glycosylated.</text>
</comment>
<comment type="mass spectrometry"/>
<name>AMP2_FAGES</name>
<reference key="1">
    <citation type="journal article" date="2003" name="Biosci. Biotechnol. Biochem.">
        <title>Purification, characterization, and sequencing of a novel type of antimicrobial peptides, Fa-AMP1 and Fa-AMP2, from seeds of buckwheat (Fagopyrum esculentum Moench.).</title>
        <authorList>
            <person name="Fujimura M."/>
            <person name="Minami Y."/>
            <person name="Watanabe K."/>
            <person name="Tadera K."/>
        </authorList>
    </citation>
    <scope>PROTEIN SEQUENCE</scope>
    <scope>FUNCTION</scope>
    <scope>IDENTIFICATION BY MASS SPECTROMETRY</scope>
    <scope>LACK OF GLYCOSYLATION</scope>
    <source>
        <tissue>Seed</tissue>
    </source>
</reference>
<dbReference type="SMR" id="P0DKH8"/>
<dbReference type="Allergome" id="12014">
    <property type="allergen name" value="Fag e 4"/>
</dbReference>
<dbReference type="Allergome" id="12016">
    <property type="allergen name" value="Fag e 4.0102"/>
</dbReference>
<dbReference type="GO" id="GO:0008061">
    <property type="term" value="F:chitin binding"/>
    <property type="evidence" value="ECO:0007669"/>
    <property type="project" value="UniProtKB-KW"/>
</dbReference>
<dbReference type="GO" id="GO:0042742">
    <property type="term" value="P:defense response to bacterium"/>
    <property type="evidence" value="ECO:0007669"/>
    <property type="project" value="UniProtKB-KW"/>
</dbReference>
<dbReference type="GO" id="GO:0050832">
    <property type="term" value="P:defense response to fungus"/>
    <property type="evidence" value="ECO:0007669"/>
    <property type="project" value="UniProtKB-KW"/>
</dbReference>
<dbReference type="GO" id="GO:0031640">
    <property type="term" value="P:killing of cells of another organism"/>
    <property type="evidence" value="ECO:0007669"/>
    <property type="project" value="UniProtKB-KW"/>
</dbReference>
<dbReference type="CDD" id="cd06921">
    <property type="entry name" value="ChtBD1_GH19_hevein"/>
    <property type="match status" value="1"/>
</dbReference>
<dbReference type="FunFam" id="3.30.60.10:FF:000001">
    <property type="entry name" value="Basic endochitinase"/>
    <property type="match status" value="1"/>
</dbReference>
<dbReference type="Gene3D" id="3.30.60.10">
    <property type="entry name" value="Endochitinase-like"/>
    <property type="match status" value="1"/>
</dbReference>
<dbReference type="InterPro" id="IPR001002">
    <property type="entry name" value="Chitin-bd_1"/>
</dbReference>
<dbReference type="InterPro" id="IPR018371">
    <property type="entry name" value="Chitin-binding_1_CS"/>
</dbReference>
<dbReference type="InterPro" id="IPR036861">
    <property type="entry name" value="Endochitinase-like_sf"/>
</dbReference>
<dbReference type="Pfam" id="PF00187">
    <property type="entry name" value="Chitin_bind_1"/>
    <property type="match status" value="1"/>
</dbReference>
<dbReference type="PRINTS" id="PR00451">
    <property type="entry name" value="CHITINBINDNG"/>
</dbReference>
<dbReference type="SMART" id="SM00270">
    <property type="entry name" value="ChtBD1"/>
    <property type="match status" value="1"/>
</dbReference>
<dbReference type="SUPFAM" id="SSF57016">
    <property type="entry name" value="Plant lectins/antimicrobial peptides"/>
    <property type="match status" value="1"/>
</dbReference>
<dbReference type="PROSITE" id="PS00026">
    <property type="entry name" value="CHIT_BIND_I_1"/>
    <property type="match status" value="1"/>
</dbReference>
<dbReference type="PROSITE" id="PS50941">
    <property type="entry name" value="CHIT_BIND_I_2"/>
    <property type="match status" value="1"/>
</dbReference>
<accession>P0DKH8</accession>
<sequence>AQCGAQGGGATCPGGLCCSQWGWCGSTPKYCGAGCQSNCR</sequence>
<feature type="chain" id="PRO_0000431411" description="Antimicrobial peptide 2">
    <location>
        <begin position="1"/>
        <end position="40"/>
    </location>
</feature>
<feature type="domain" description="Chitin-binding type-1" evidence="1">
    <location>
        <begin position="1"/>
        <end position="40"/>
    </location>
</feature>
<feature type="disulfide bond" evidence="1">
    <location>
        <begin position="3"/>
        <end position="18"/>
    </location>
</feature>
<feature type="disulfide bond" evidence="1">
    <location>
        <begin position="12"/>
        <end position="24"/>
    </location>
</feature>
<feature type="disulfide bond" evidence="1">
    <location>
        <begin position="17"/>
        <end position="31"/>
    </location>
</feature>
<feature type="disulfide bond" evidence="1">
    <location>
        <begin position="35"/>
        <end position="39"/>
    </location>
</feature>
<evidence type="ECO:0000255" key="1">
    <source>
        <dbReference type="PROSITE-ProRule" id="PRU00261"/>
    </source>
</evidence>
<evidence type="ECO:0000269" key="2">
    <source>
    </source>
</evidence>
<proteinExistence type="evidence at protein level"/>
<keyword id="KW-0044">Antibiotic</keyword>
<keyword id="KW-0929">Antimicrobial</keyword>
<keyword id="KW-0147">Chitin-binding</keyword>
<keyword id="KW-0903">Direct protein sequencing</keyword>
<keyword id="KW-1015">Disulfide bond</keyword>
<keyword id="KW-0295">Fungicide</keyword>
<keyword id="KW-0611">Plant defense</keyword>
<protein>
    <recommendedName>
        <fullName>Antimicrobial peptide 2</fullName>
        <shortName>Fa-AMP2</shortName>
    </recommendedName>
</protein>